<reference key="1">
    <citation type="journal article" date="1998" name="Nature">
        <title>The genome sequence of Rickettsia prowazekii and the origin of mitochondria.</title>
        <authorList>
            <person name="Andersson S.G.E."/>
            <person name="Zomorodipour A."/>
            <person name="Andersson J.O."/>
            <person name="Sicheritz-Ponten T."/>
            <person name="Alsmark U.C.M."/>
            <person name="Podowski R.M."/>
            <person name="Naeslund A.K."/>
            <person name="Eriksson A.-S."/>
            <person name="Winkler H.H."/>
            <person name="Kurland C.G."/>
        </authorList>
    </citation>
    <scope>NUCLEOTIDE SEQUENCE [LARGE SCALE GENOMIC DNA]</scope>
    <source>
        <strain>Madrid E</strain>
    </source>
</reference>
<comment type="function">
    <text evidence="1">An essential GTPase which binds GTP, GDP and possibly (p)ppGpp with moderate affinity, with high nucleotide exchange rates and a fairly low GTP hydrolysis rate. Plays a role in control of the cell cycle, stress response, ribosome biogenesis and in those bacteria that undergo differentiation, in morphogenesis control.</text>
</comment>
<comment type="cofactor">
    <cofactor evidence="1">
        <name>Mg(2+)</name>
        <dbReference type="ChEBI" id="CHEBI:18420"/>
    </cofactor>
</comment>
<comment type="subunit">
    <text evidence="1">Monomer.</text>
</comment>
<comment type="subcellular location">
    <subcellularLocation>
        <location evidence="1">Cytoplasm</location>
    </subcellularLocation>
</comment>
<comment type="similarity">
    <text evidence="1">Belongs to the TRAFAC class OBG-HflX-like GTPase superfamily. OBG GTPase family.</text>
</comment>
<proteinExistence type="inferred from homology"/>
<name>OBG_RICPR</name>
<evidence type="ECO:0000255" key="1">
    <source>
        <dbReference type="HAMAP-Rule" id="MF_01454"/>
    </source>
</evidence>
<evidence type="ECO:0000255" key="2">
    <source>
        <dbReference type="PROSITE-ProRule" id="PRU01231"/>
    </source>
</evidence>
<sequence length="331" mass="36517">MHFIDEVKIYIKGGNGGNGCISFHREKFIDRGGPDGGDGGFGGSVIFRSNHHINTLVNYRYQQHFTAENGENGKGSNRSGKSGKSLILDVPVGTQIFSQDGDILLYDFTEDEKSFEIIKGGCGGLGNSHFKTSVNQAPRKSTEGEIAEEMWIHLRLKLLSDVGLIGLPNAGKSTFLSVVTAAKPKIADYPFTTLVPNLGVVYIDDEEFVIADIPGLIAGAHQGYGLGDKFLKHIERCNVLIHLIDGASNNVIADYNTVRFELESYSDYLKNKIEIICLNKCDVLVDEEIQKKIKKLQKVTNKVVHPISTYNNQGVNKIVKLALEIIKNQKY</sequence>
<organism>
    <name type="scientific">Rickettsia prowazekii (strain Madrid E)</name>
    <dbReference type="NCBI Taxonomy" id="272947"/>
    <lineage>
        <taxon>Bacteria</taxon>
        <taxon>Pseudomonadati</taxon>
        <taxon>Pseudomonadota</taxon>
        <taxon>Alphaproteobacteria</taxon>
        <taxon>Rickettsiales</taxon>
        <taxon>Rickettsiaceae</taxon>
        <taxon>Rickettsieae</taxon>
        <taxon>Rickettsia</taxon>
        <taxon>typhus group</taxon>
    </lineage>
</organism>
<protein>
    <recommendedName>
        <fullName evidence="1">GTPase Obg</fullName>
        <ecNumber evidence="1">3.6.5.-</ecNumber>
    </recommendedName>
    <alternativeName>
        <fullName evidence="1">GTP-binding protein Obg</fullName>
    </alternativeName>
</protein>
<keyword id="KW-0963">Cytoplasm</keyword>
<keyword id="KW-0342">GTP-binding</keyword>
<keyword id="KW-0378">Hydrolase</keyword>
<keyword id="KW-0460">Magnesium</keyword>
<keyword id="KW-0479">Metal-binding</keyword>
<keyword id="KW-0547">Nucleotide-binding</keyword>
<keyword id="KW-1185">Reference proteome</keyword>
<dbReference type="EC" id="3.6.5.-" evidence="1"/>
<dbReference type="EMBL" id="AJ235273">
    <property type="protein sequence ID" value="CAA15267.1"/>
    <property type="molecule type" value="Genomic_DNA"/>
</dbReference>
<dbReference type="PIR" id="C71646">
    <property type="entry name" value="C71646"/>
</dbReference>
<dbReference type="RefSeq" id="NP_221191.1">
    <property type="nucleotide sequence ID" value="NC_000963.1"/>
</dbReference>
<dbReference type="SMR" id="Q9ZCB6"/>
<dbReference type="STRING" id="272947.gene:17555912"/>
<dbReference type="EnsemblBacteria" id="CAA15267">
    <property type="protein sequence ID" value="CAA15267"/>
    <property type="gene ID" value="CAA15267"/>
</dbReference>
<dbReference type="KEGG" id="rpr:RP843"/>
<dbReference type="PATRIC" id="fig|272947.5.peg.881"/>
<dbReference type="eggNOG" id="COG0536">
    <property type="taxonomic scope" value="Bacteria"/>
</dbReference>
<dbReference type="HOGENOM" id="CLU_011747_2_0_5"/>
<dbReference type="OrthoDB" id="9807318at2"/>
<dbReference type="Proteomes" id="UP000002480">
    <property type="component" value="Chromosome"/>
</dbReference>
<dbReference type="GO" id="GO:0005737">
    <property type="term" value="C:cytoplasm"/>
    <property type="evidence" value="ECO:0007669"/>
    <property type="project" value="UniProtKB-SubCell"/>
</dbReference>
<dbReference type="GO" id="GO:0005525">
    <property type="term" value="F:GTP binding"/>
    <property type="evidence" value="ECO:0007669"/>
    <property type="project" value="UniProtKB-UniRule"/>
</dbReference>
<dbReference type="GO" id="GO:0003924">
    <property type="term" value="F:GTPase activity"/>
    <property type="evidence" value="ECO:0007669"/>
    <property type="project" value="UniProtKB-UniRule"/>
</dbReference>
<dbReference type="GO" id="GO:0000287">
    <property type="term" value="F:magnesium ion binding"/>
    <property type="evidence" value="ECO:0007669"/>
    <property type="project" value="InterPro"/>
</dbReference>
<dbReference type="GO" id="GO:0042254">
    <property type="term" value="P:ribosome biogenesis"/>
    <property type="evidence" value="ECO:0007669"/>
    <property type="project" value="UniProtKB-UniRule"/>
</dbReference>
<dbReference type="CDD" id="cd01898">
    <property type="entry name" value="Obg"/>
    <property type="match status" value="1"/>
</dbReference>
<dbReference type="FunFam" id="2.70.210.12:FF:000001">
    <property type="entry name" value="GTPase Obg"/>
    <property type="match status" value="1"/>
</dbReference>
<dbReference type="Gene3D" id="2.70.210.12">
    <property type="entry name" value="GTP1/OBG domain"/>
    <property type="match status" value="1"/>
</dbReference>
<dbReference type="Gene3D" id="3.40.50.300">
    <property type="entry name" value="P-loop containing nucleotide triphosphate hydrolases"/>
    <property type="match status" value="1"/>
</dbReference>
<dbReference type="HAMAP" id="MF_01454">
    <property type="entry name" value="GTPase_Obg"/>
    <property type="match status" value="1"/>
</dbReference>
<dbReference type="InterPro" id="IPR031167">
    <property type="entry name" value="G_OBG"/>
</dbReference>
<dbReference type="InterPro" id="IPR006073">
    <property type="entry name" value="GTP-bd"/>
</dbReference>
<dbReference type="InterPro" id="IPR014100">
    <property type="entry name" value="GTP-bd_Obg/CgtA"/>
</dbReference>
<dbReference type="InterPro" id="IPR006169">
    <property type="entry name" value="GTP1_OBG_dom"/>
</dbReference>
<dbReference type="InterPro" id="IPR036726">
    <property type="entry name" value="GTP1_OBG_dom_sf"/>
</dbReference>
<dbReference type="InterPro" id="IPR045086">
    <property type="entry name" value="OBG_GTPase"/>
</dbReference>
<dbReference type="InterPro" id="IPR027417">
    <property type="entry name" value="P-loop_NTPase"/>
</dbReference>
<dbReference type="NCBIfam" id="TIGR02729">
    <property type="entry name" value="Obg_CgtA"/>
    <property type="match status" value="1"/>
</dbReference>
<dbReference type="NCBIfam" id="NF008955">
    <property type="entry name" value="PRK12297.1"/>
    <property type="match status" value="1"/>
</dbReference>
<dbReference type="NCBIfam" id="NF008956">
    <property type="entry name" value="PRK12299.1"/>
    <property type="match status" value="1"/>
</dbReference>
<dbReference type="PANTHER" id="PTHR11702">
    <property type="entry name" value="DEVELOPMENTALLY REGULATED GTP-BINDING PROTEIN-RELATED"/>
    <property type="match status" value="1"/>
</dbReference>
<dbReference type="PANTHER" id="PTHR11702:SF31">
    <property type="entry name" value="MITOCHONDRIAL RIBOSOME-ASSOCIATED GTPASE 2"/>
    <property type="match status" value="1"/>
</dbReference>
<dbReference type="Pfam" id="PF01018">
    <property type="entry name" value="GTP1_OBG"/>
    <property type="match status" value="1"/>
</dbReference>
<dbReference type="Pfam" id="PF01926">
    <property type="entry name" value="MMR_HSR1"/>
    <property type="match status" value="1"/>
</dbReference>
<dbReference type="PIRSF" id="PIRSF002401">
    <property type="entry name" value="GTP_bd_Obg/CgtA"/>
    <property type="match status" value="1"/>
</dbReference>
<dbReference type="PRINTS" id="PR00326">
    <property type="entry name" value="GTP1OBG"/>
</dbReference>
<dbReference type="SUPFAM" id="SSF82051">
    <property type="entry name" value="Obg GTP-binding protein N-terminal domain"/>
    <property type="match status" value="1"/>
</dbReference>
<dbReference type="SUPFAM" id="SSF52540">
    <property type="entry name" value="P-loop containing nucleoside triphosphate hydrolases"/>
    <property type="match status" value="1"/>
</dbReference>
<dbReference type="PROSITE" id="PS51710">
    <property type="entry name" value="G_OBG"/>
    <property type="match status" value="1"/>
</dbReference>
<dbReference type="PROSITE" id="PS51883">
    <property type="entry name" value="OBG"/>
    <property type="match status" value="1"/>
</dbReference>
<accession>Q9ZCB6</accession>
<gene>
    <name evidence="1" type="primary">obg</name>
    <name type="ordered locus">RP843</name>
</gene>
<feature type="chain" id="PRO_0000386205" description="GTPase Obg">
    <location>
        <begin position="1"/>
        <end position="331"/>
    </location>
</feature>
<feature type="domain" description="Obg" evidence="2">
    <location>
        <begin position="1"/>
        <end position="159"/>
    </location>
</feature>
<feature type="domain" description="OBG-type G" evidence="1">
    <location>
        <begin position="160"/>
        <end position="327"/>
    </location>
</feature>
<feature type="binding site" evidence="1">
    <location>
        <begin position="166"/>
        <end position="173"/>
    </location>
    <ligand>
        <name>GTP</name>
        <dbReference type="ChEBI" id="CHEBI:37565"/>
    </ligand>
</feature>
<feature type="binding site" evidence="1">
    <location>
        <position position="173"/>
    </location>
    <ligand>
        <name>Mg(2+)</name>
        <dbReference type="ChEBI" id="CHEBI:18420"/>
    </ligand>
</feature>
<feature type="binding site" evidence="1">
    <location>
        <begin position="191"/>
        <end position="195"/>
    </location>
    <ligand>
        <name>GTP</name>
        <dbReference type="ChEBI" id="CHEBI:37565"/>
    </ligand>
</feature>
<feature type="binding site" evidence="1">
    <location>
        <position position="193"/>
    </location>
    <ligand>
        <name>Mg(2+)</name>
        <dbReference type="ChEBI" id="CHEBI:18420"/>
    </ligand>
</feature>
<feature type="binding site" evidence="1">
    <location>
        <begin position="212"/>
        <end position="215"/>
    </location>
    <ligand>
        <name>GTP</name>
        <dbReference type="ChEBI" id="CHEBI:37565"/>
    </ligand>
</feature>
<feature type="binding site" evidence="1">
    <location>
        <begin position="279"/>
        <end position="282"/>
    </location>
    <ligand>
        <name>GTP</name>
        <dbReference type="ChEBI" id="CHEBI:37565"/>
    </ligand>
</feature>
<feature type="binding site" evidence="1">
    <location>
        <begin position="308"/>
        <end position="310"/>
    </location>
    <ligand>
        <name>GTP</name>
        <dbReference type="ChEBI" id="CHEBI:37565"/>
    </ligand>
</feature>